<feature type="chain" id="PRO_0000365217" description="Probable DNA ligase">
    <location>
        <begin position="1"/>
        <end position="519"/>
    </location>
</feature>
<feature type="active site" description="N6-AMP-lysine intermediate" evidence="1">
    <location>
        <position position="213"/>
    </location>
</feature>
<feature type="binding site" evidence="1">
    <location>
        <position position="211"/>
    </location>
    <ligand>
        <name>ATP</name>
        <dbReference type="ChEBI" id="CHEBI:30616"/>
    </ligand>
</feature>
<feature type="binding site" evidence="1">
    <location>
        <position position="218"/>
    </location>
    <ligand>
        <name>ATP</name>
        <dbReference type="ChEBI" id="CHEBI:30616"/>
    </ligand>
</feature>
<feature type="binding site" evidence="1">
    <location>
        <position position="233"/>
    </location>
    <ligand>
        <name>ATP</name>
        <dbReference type="ChEBI" id="CHEBI:30616"/>
    </ligand>
</feature>
<feature type="binding site" evidence="1">
    <location>
        <position position="262"/>
    </location>
    <ligand>
        <name>ATP</name>
        <dbReference type="ChEBI" id="CHEBI:30616"/>
    </ligand>
</feature>
<feature type="binding site" evidence="1">
    <location>
        <position position="302"/>
    </location>
    <ligand>
        <name>ATP</name>
        <dbReference type="ChEBI" id="CHEBI:30616"/>
    </ligand>
</feature>
<feature type="binding site" evidence="1">
    <location>
        <position position="374"/>
    </location>
    <ligand>
        <name>ATP</name>
        <dbReference type="ChEBI" id="CHEBI:30616"/>
    </ligand>
</feature>
<feature type="binding site" evidence="1">
    <location>
        <position position="380"/>
    </location>
    <ligand>
        <name>ATP</name>
        <dbReference type="ChEBI" id="CHEBI:30616"/>
    </ligand>
</feature>
<evidence type="ECO:0000255" key="1">
    <source>
        <dbReference type="HAMAP-Rule" id="MF_00407"/>
    </source>
</evidence>
<organism>
    <name type="scientific">Anaeromyxobacter sp. (strain Fw109-5)</name>
    <dbReference type="NCBI Taxonomy" id="404589"/>
    <lineage>
        <taxon>Bacteria</taxon>
        <taxon>Pseudomonadati</taxon>
        <taxon>Myxococcota</taxon>
        <taxon>Myxococcia</taxon>
        <taxon>Myxococcales</taxon>
        <taxon>Cystobacterineae</taxon>
        <taxon>Anaeromyxobacteraceae</taxon>
        <taxon>Anaeromyxobacter</taxon>
    </lineage>
</organism>
<proteinExistence type="inferred from homology"/>
<sequence>MQLAELVQTSDVVARTAGRLEKIARLADALRGLAPEERLAGASWLAGELRQGRIGLGPAAVRAALEATAPADAPALAVREVDASLDRLAAARGAGSGRERAALLAALLARASADERDFLARLVLGELRQGALEGVLVEAVARAAAVPAGEVRRAVMMAGALPPVAEAALAEGAAGLSRFRLRLLEPVQPMLAQPAAGVDEALAALGEAALEWKLDGARVQVHKDGGEVRVFSRALRDVTPAVPEVVEAVRRLPASSLVLDGEAIALRGDGAPEPFQVTMRRFGRKLDVAGLREGVPLSVLFFDALHTAGEDLIARPASERHLALAAAVPDALRVPRLVTSDGAAAAAFLEGALARGHEGLLAKSLTAPYEAGRRGASWLKVKRAHTLDLVVLAAEWGSGRREGFLSNLHLGARDPEGGGFVMLGKTFKGMTDAMLAWQTERFRALALGSTDGYVVHLRPELVVEVAFDGLQESSRYPGGLALRFARVKRYREDKRPEEADTIATVRALHARQVAAERGT</sequence>
<dbReference type="EC" id="6.5.1.1" evidence="1"/>
<dbReference type="EMBL" id="CP000769">
    <property type="protein sequence ID" value="ABS28479.1"/>
    <property type="molecule type" value="Genomic_DNA"/>
</dbReference>
<dbReference type="RefSeq" id="WP_012099123.1">
    <property type="nucleotide sequence ID" value="NC_009675.1"/>
</dbReference>
<dbReference type="SMR" id="A7HID3"/>
<dbReference type="STRING" id="404589.Anae109_4301"/>
<dbReference type="KEGG" id="afw:Anae109_4301"/>
<dbReference type="eggNOG" id="COG1793">
    <property type="taxonomic scope" value="Bacteria"/>
</dbReference>
<dbReference type="HOGENOM" id="CLU_005138_6_1_7"/>
<dbReference type="OrthoDB" id="9767858at2"/>
<dbReference type="Proteomes" id="UP000006382">
    <property type="component" value="Chromosome"/>
</dbReference>
<dbReference type="GO" id="GO:0005524">
    <property type="term" value="F:ATP binding"/>
    <property type="evidence" value="ECO:0007669"/>
    <property type="project" value="UniProtKB-UniRule"/>
</dbReference>
<dbReference type="GO" id="GO:0003677">
    <property type="term" value="F:DNA binding"/>
    <property type="evidence" value="ECO:0007669"/>
    <property type="project" value="InterPro"/>
</dbReference>
<dbReference type="GO" id="GO:0003910">
    <property type="term" value="F:DNA ligase (ATP) activity"/>
    <property type="evidence" value="ECO:0007669"/>
    <property type="project" value="UniProtKB-UniRule"/>
</dbReference>
<dbReference type="GO" id="GO:0046872">
    <property type="term" value="F:metal ion binding"/>
    <property type="evidence" value="ECO:0007669"/>
    <property type="project" value="UniProtKB-KW"/>
</dbReference>
<dbReference type="GO" id="GO:0051301">
    <property type="term" value="P:cell division"/>
    <property type="evidence" value="ECO:0007669"/>
    <property type="project" value="UniProtKB-KW"/>
</dbReference>
<dbReference type="GO" id="GO:0071897">
    <property type="term" value="P:DNA biosynthetic process"/>
    <property type="evidence" value="ECO:0007669"/>
    <property type="project" value="InterPro"/>
</dbReference>
<dbReference type="GO" id="GO:0006310">
    <property type="term" value="P:DNA recombination"/>
    <property type="evidence" value="ECO:0007669"/>
    <property type="project" value="UniProtKB-UniRule"/>
</dbReference>
<dbReference type="GO" id="GO:0006281">
    <property type="term" value="P:DNA repair"/>
    <property type="evidence" value="ECO:0007669"/>
    <property type="project" value="UniProtKB-UniRule"/>
</dbReference>
<dbReference type="GO" id="GO:0006260">
    <property type="term" value="P:DNA replication"/>
    <property type="evidence" value="ECO:0007669"/>
    <property type="project" value="UniProtKB-UniRule"/>
</dbReference>
<dbReference type="CDD" id="cd07901">
    <property type="entry name" value="Adenylation_DNA_ligase_Arch_LigB"/>
    <property type="match status" value="1"/>
</dbReference>
<dbReference type="CDD" id="cd07972">
    <property type="entry name" value="OBF_DNA_ligase_Arch_LigB"/>
    <property type="match status" value="1"/>
</dbReference>
<dbReference type="FunFam" id="2.40.50.140:FF:000163">
    <property type="entry name" value="Probable DNA ligase"/>
    <property type="match status" value="1"/>
</dbReference>
<dbReference type="Gene3D" id="1.10.3260.10">
    <property type="entry name" value="DNA ligase, ATP-dependent, N-terminal domain"/>
    <property type="match status" value="1"/>
</dbReference>
<dbReference type="Gene3D" id="3.30.470.30">
    <property type="entry name" value="DNA ligase/mRNA capping enzyme"/>
    <property type="match status" value="1"/>
</dbReference>
<dbReference type="Gene3D" id="2.40.50.140">
    <property type="entry name" value="Nucleic acid-binding proteins"/>
    <property type="match status" value="1"/>
</dbReference>
<dbReference type="HAMAP" id="MF_00407">
    <property type="entry name" value="DNA_ligase"/>
    <property type="match status" value="1"/>
</dbReference>
<dbReference type="InterPro" id="IPR050191">
    <property type="entry name" value="ATP-dep_DNA_ligase"/>
</dbReference>
<dbReference type="InterPro" id="IPR022865">
    <property type="entry name" value="DNA_ligae_ATP-dep_bac/arc"/>
</dbReference>
<dbReference type="InterPro" id="IPR000977">
    <property type="entry name" value="DNA_ligase_ATP-dep"/>
</dbReference>
<dbReference type="InterPro" id="IPR012309">
    <property type="entry name" value="DNA_ligase_ATP-dep_C"/>
</dbReference>
<dbReference type="InterPro" id="IPR012310">
    <property type="entry name" value="DNA_ligase_ATP-dep_cent"/>
</dbReference>
<dbReference type="InterPro" id="IPR016059">
    <property type="entry name" value="DNA_ligase_ATP-dep_CS"/>
</dbReference>
<dbReference type="InterPro" id="IPR012308">
    <property type="entry name" value="DNA_ligase_ATP-dep_N"/>
</dbReference>
<dbReference type="InterPro" id="IPR036599">
    <property type="entry name" value="DNA_ligase_N_sf"/>
</dbReference>
<dbReference type="InterPro" id="IPR012340">
    <property type="entry name" value="NA-bd_OB-fold"/>
</dbReference>
<dbReference type="NCBIfam" id="TIGR00574">
    <property type="entry name" value="dnl1"/>
    <property type="match status" value="1"/>
</dbReference>
<dbReference type="NCBIfam" id="NF002868">
    <property type="entry name" value="PRK03180.1"/>
    <property type="match status" value="1"/>
</dbReference>
<dbReference type="PANTHER" id="PTHR45674">
    <property type="entry name" value="DNA LIGASE 1/3 FAMILY MEMBER"/>
    <property type="match status" value="1"/>
</dbReference>
<dbReference type="PANTHER" id="PTHR45674:SF13">
    <property type="entry name" value="DNA LIGASE-RELATED"/>
    <property type="match status" value="1"/>
</dbReference>
<dbReference type="Pfam" id="PF04679">
    <property type="entry name" value="DNA_ligase_A_C"/>
    <property type="match status" value="1"/>
</dbReference>
<dbReference type="Pfam" id="PF01068">
    <property type="entry name" value="DNA_ligase_A_M"/>
    <property type="match status" value="1"/>
</dbReference>
<dbReference type="Pfam" id="PF04675">
    <property type="entry name" value="DNA_ligase_A_N"/>
    <property type="match status" value="1"/>
</dbReference>
<dbReference type="SUPFAM" id="SSF117018">
    <property type="entry name" value="ATP-dependent DNA ligase DNA-binding domain"/>
    <property type="match status" value="1"/>
</dbReference>
<dbReference type="SUPFAM" id="SSF56091">
    <property type="entry name" value="DNA ligase/mRNA capping enzyme, catalytic domain"/>
    <property type="match status" value="1"/>
</dbReference>
<dbReference type="SUPFAM" id="SSF50249">
    <property type="entry name" value="Nucleic acid-binding proteins"/>
    <property type="match status" value="1"/>
</dbReference>
<dbReference type="PROSITE" id="PS00697">
    <property type="entry name" value="DNA_LIGASE_A1"/>
    <property type="match status" value="1"/>
</dbReference>
<dbReference type="PROSITE" id="PS00333">
    <property type="entry name" value="DNA_LIGASE_A2"/>
    <property type="match status" value="1"/>
</dbReference>
<dbReference type="PROSITE" id="PS50160">
    <property type="entry name" value="DNA_LIGASE_A3"/>
    <property type="match status" value="1"/>
</dbReference>
<reference key="1">
    <citation type="journal article" date="2015" name="Genome Announc.">
        <title>Complete genome sequence of Anaeromyxobacter sp. Fw109-5, an anaerobic, metal-reducing bacterium isolated from a contaminated subsurface environment.</title>
        <authorList>
            <person name="Hwang C."/>
            <person name="Copeland A."/>
            <person name="Lucas S."/>
            <person name="Lapidus A."/>
            <person name="Barry K."/>
            <person name="Glavina Del Rio T."/>
            <person name="Dalin E."/>
            <person name="Tice H."/>
            <person name="Pitluck S."/>
            <person name="Sims D."/>
            <person name="Brettin T."/>
            <person name="Bruce D.C."/>
            <person name="Detter J.C."/>
            <person name="Han C.S."/>
            <person name="Schmutz J."/>
            <person name="Larimer F.W."/>
            <person name="Land M.L."/>
            <person name="Hauser L.J."/>
            <person name="Kyrpides N."/>
            <person name="Lykidis A."/>
            <person name="Richardson P."/>
            <person name="Belieav A."/>
            <person name="Sanford R.A."/>
            <person name="Loeffler F.E."/>
            <person name="Fields M.W."/>
        </authorList>
    </citation>
    <scope>NUCLEOTIDE SEQUENCE [LARGE SCALE GENOMIC DNA]</scope>
    <source>
        <strain>Fw109-5</strain>
    </source>
</reference>
<comment type="function">
    <text evidence="1">DNA ligase that seals nicks in double-stranded DNA during DNA replication, DNA recombination and DNA repair.</text>
</comment>
<comment type="catalytic activity">
    <reaction evidence="1">
        <text>ATP + (deoxyribonucleotide)n-3'-hydroxyl + 5'-phospho-(deoxyribonucleotide)m = (deoxyribonucleotide)n+m + AMP + diphosphate.</text>
        <dbReference type="EC" id="6.5.1.1"/>
    </reaction>
</comment>
<comment type="cofactor">
    <cofactor evidence="1">
        <name>Mg(2+)</name>
        <dbReference type="ChEBI" id="CHEBI:18420"/>
    </cofactor>
</comment>
<comment type="similarity">
    <text evidence="1">Belongs to the ATP-dependent DNA ligase family.</text>
</comment>
<gene>
    <name evidence="1" type="primary">lig</name>
    <name type="ordered locus">Anae109_4301</name>
</gene>
<protein>
    <recommendedName>
        <fullName evidence="1">Probable DNA ligase</fullName>
        <ecNumber evidence="1">6.5.1.1</ecNumber>
    </recommendedName>
    <alternativeName>
        <fullName evidence="1">Polydeoxyribonucleotide synthase [ATP]</fullName>
    </alternativeName>
</protein>
<keyword id="KW-0067">ATP-binding</keyword>
<keyword id="KW-0131">Cell cycle</keyword>
<keyword id="KW-0132">Cell division</keyword>
<keyword id="KW-0227">DNA damage</keyword>
<keyword id="KW-0233">DNA recombination</keyword>
<keyword id="KW-0234">DNA repair</keyword>
<keyword id="KW-0235">DNA replication</keyword>
<keyword id="KW-0436">Ligase</keyword>
<keyword id="KW-0460">Magnesium</keyword>
<keyword id="KW-0479">Metal-binding</keyword>
<keyword id="KW-0547">Nucleotide-binding</keyword>
<keyword id="KW-1185">Reference proteome</keyword>
<accession>A7HID3</accession>
<name>DNLI_ANADF</name>